<evidence type="ECO:0000255" key="1">
    <source>
        <dbReference type="HAMAP-Rule" id="MF_00568"/>
    </source>
</evidence>
<accession>A2C9Z7</accession>
<reference key="1">
    <citation type="journal article" date="2007" name="PLoS Genet.">
        <title>Patterns and implications of gene gain and loss in the evolution of Prochlorococcus.</title>
        <authorList>
            <person name="Kettler G.C."/>
            <person name="Martiny A.C."/>
            <person name="Huang K."/>
            <person name="Zucker J."/>
            <person name="Coleman M.L."/>
            <person name="Rodrigue S."/>
            <person name="Chen F."/>
            <person name="Lapidus A."/>
            <person name="Ferriera S."/>
            <person name="Johnson J."/>
            <person name="Steglich C."/>
            <person name="Church G.M."/>
            <person name="Richardson P."/>
            <person name="Chisholm S.W."/>
        </authorList>
    </citation>
    <scope>NUCLEOTIDE SEQUENCE [LARGE SCALE GENOMIC DNA]</scope>
    <source>
        <strain>MIT 9303</strain>
    </source>
</reference>
<proteinExistence type="inferred from homology"/>
<comment type="function">
    <text evidence="1">Catalyzes the condensation of iminoaspartate with dihydroxyacetone phosphate to form quinolinate.</text>
</comment>
<comment type="catalytic activity">
    <reaction evidence="1">
        <text>iminosuccinate + dihydroxyacetone phosphate = quinolinate + phosphate + 2 H2O + H(+)</text>
        <dbReference type="Rhea" id="RHEA:25888"/>
        <dbReference type="ChEBI" id="CHEBI:15377"/>
        <dbReference type="ChEBI" id="CHEBI:15378"/>
        <dbReference type="ChEBI" id="CHEBI:29959"/>
        <dbReference type="ChEBI" id="CHEBI:43474"/>
        <dbReference type="ChEBI" id="CHEBI:57642"/>
        <dbReference type="ChEBI" id="CHEBI:77875"/>
        <dbReference type="EC" id="2.5.1.72"/>
    </reaction>
    <physiologicalReaction direction="left-to-right" evidence="1">
        <dbReference type="Rhea" id="RHEA:25889"/>
    </physiologicalReaction>
</comment>
<comment type="cofactor">
    <cofactor evidence="1">
        <name>[4Fe-4S] cluster</name>
        <dbReference type="ChEBI" id="CHEBI:49883"/>
    </cofactor>
    <text evidence="1">Binds 1 [4Fe-4S] cluster per subunit.</text>
</comment>
<comment type="pathway">
    <text evidence="1">Cofactor biosynthesis; NAD(+) biosynthesis; quinolinate from iminoaspartate: step 1/1.</text>
</comment>
<comment type="subcellular location">
    <subcellularLocation>
        <location evidence="1">Cytoplasm</location>
    </subcellularLocation>
</comment>
<comment type="similarity">
    <text evidence="1">Belongs to the quinolinate synthase family. Type 2 subfamily.</text>
</comment>
<protein>
    <recommendedName>
        <fullName evidence="1">Quinolinate synthase</fullName>
        <ecNumber evidence="1">2.5.1.72</ecNumber>
    </recommendedName>
</protein>
<organism>
    <name type="scientific">Prochlorococcus marinus (strain MIT 9303)</name>
    <dbReference type="NCBI Taxonomy" id="59922"/>
    <lineage>
        <taxon>Bacteria</taxon>
        <taxon>Bacillati</taxon>
        <taxon>Cyanobacteriota</taxon>
        <taxon>Cyanophyceae</taxon>
        <taxon>Synechococcales</taxon>
        <taxon>Prochlorococcaceae</taxon>
        <taxon>Prochlorococcus</taxon>
    </lineage>
</organism>
<gene>
    <name evidence="1" type="primary">nadA</name>
    <name type="ordered locus">P9303_15631</name>
</gene>
<name>NADA_PROM3</name>
<feature type="chain" id="PRO_1000129441" description="Quinolinate synthase">
    <location>
        <begin position="1"/>
        <end position="333"/>
    </location>
</feature>
<feature type="binding site" evidence="1">
    <location>
        <position position="41"/>
    </location>
    <ligand>
        <name>iminosuccinate</name>
        <dbReference type="ChEBI" id="CHEBI:77875"/>
    </ligand>
</feature>
<feature type="binding site" evidence="1">
    <location>
        <position position="58"/>
    </location>
    <ligand>
        <name>iminosuccinate</name>
        <dbReference type="ChEBI" id="CHEBI:77875"/>
    </ligand>
</feature>
<feature type="binding site" evidence="1">
    <location>
        <position position="103"/>
    </location>
    <ligand>
        <name>[4Fe-4S] cluster</name>
        <dbReference type="ChEBI" id="CHEBI:49883"/>
    </ligand>
</feature>
<feature type="binding site" evidence="1">
    <location>
        <begin position="129"/>
        <end position="131"/>
    </location>
    <ligand>
        <name>iminosuccinate</name>
        <dbReference type="ChEBI" id="CHEBI:77875"/>
    </ligand>
</feature>
<feature type="binding site" evidence="1">
    <location>
        <position position="146"/>
    </location>
    <ligand>
        <name>iminosuccinate</name>
        <dbReference type="ChEBI" id="CHEBI:77875"/>
    </ligand>
</feature>
<feature type="binding site" evidence="1">
    <location>
        <position position="189"/>
    </location>
    <ligand>
        <name>[4Fe-4S] cluster</name>
        <dbReference type="ChEBI" id="CHEBI:49883"/>
    </ligand>
</feature>
<feature type="binding site" evidence="1">
    <location>
        <begin position="215"/>
        <end position="217"/>
    </location>
    <ligand>
        <name>iminosuccinate</name>
        <dbReference type="ChEBI" id="CHEBI:77875"/>
    </ligand>
</feature>
<feature type="binding site" evidence="1">
    <location>
        <position position="232"/>
    </location>
    <ligand>
        <name>iminosuccinate</name>
        <dbReference type="ChEBI" id="CHEBI:77875"/>
    </ligand>
</feature>
<feature type="binding site" evidence="1">
    <location>
        <position position="282"/>
    </location>
    <ligand>
        <name>[4Fe-4S] cluster</name>
        <dbReference type="ChEBI" id="CHEBI:49883"/>
    </ligand>
</feature>
<keyword id="KW-0004">4Fe-4S</keyword>
<keyword id="KW-0963">Cytoplasm</keyword>
<keyword id="KW-0408">Iron</keyword>
<keyword id="KW-0411">Iron-sulfur</keyword>
<keyword id="KW-0479">Metal-binding</keyword>
<keyword id="KW-0662">Pyridine nucleotide biosynthesis</keyword>
<keyword id="KW-0808">Transferase</keyword>
<sequence>MVRMTAVCTAKTVSPVPSTRKEFKGAIAELRKKLNAVILAHYYQDPEIQDIADFIGDSLELSRRAASTNADVIVFCGVHFMAETAKILSPEKIVLLPDLEAGCSLADDCPADEFAAFRDKHPDHIVVSYINCTAAVKAQSDLICTSSNAVALVSQLPKDRPILFAPDQNLGRWVQKQSGRELTIWPGRCMVHETFSEEALLKLKMMHPEAKVIAHPECLERLLELADYVGSTSKLLEYTETNPGTKFIVLTEPGILHQMKQRMPNKEFMDVPGIDGCSCNECPYMRLNTLEKLWRCLSTMKPSIEIEEGVRQKALIPIQRMLNMKEKQEASQH</sequence>
<dbReference type="EC" id="2.5.1.72" evidence="1"/>
<dbReference type="EMBL" id="CP000554">
    <property type="protein sequence ID" value="ABM78307.1"/>
    <property type="molecule type" value="Genomic_DNA"/>
</dbReference>
<dbReference type="RefSeq" id="WP_011826198.1">
    <property type="nucleotide sequence ID" value="NC_008820.1"/>
</dbReference>
<dbReference type="SMR" id="A2C9Z7"/>
<dbReference type="STRING" id="59922.P9303_15631"/>
<dbReference type="KEGG" id="pmf:P9303_15631"/>
<dbReference type="HOGENOM" id="CLU_047382_0_0_3"/>
<dbReference type="UniPathway" id="UPA00253">
    <property type="reaction ID" value="UER00327"/>
</dbReference>
<dbReference type="Proteomes" id="UP000002274">
    <property type="component" value="Chromosome"/>
</dbReference>
<dbReference type="GO" id="GO:0005829">
    <property type="term" value="C:cytosol"/>
    <property type="evidence" value="ECO:0007669"/>
    <property type="project" value="TreeGrafter"/>
</dbReference>
<dbReference type="GO" id="GO:0051539">
    <property type="term" value="F:4 iron, 4 sulfur cluster binding"/>
    <property type="evidence" value="ECO:0007669"/>
    <property type="project" value="UniProtKB-KW"/>
</dbReference>
<dbReference type="GO" id="GO:0046872">
    <property type="term" value="F:metal ion binding"/>
    <property type="evidence" value="ECO:0007669"/>
    <property type="project" value="UniProtKB-KW"/>
</dbReference>
<dbReference type="GO" id="GO:0008987">
    <property type="term" value="F:quinolinate synthetase A activity"/>
    <property type="evidence" value="ECO:0007669"/>
    <property type="project" value="UniProtKB-UniRule"/>
</dbReference>
<dbReference type="GO" id="GO:0034628">
    <property type="term" value="P:'de novo' NAD biosynthetic process from L-aspartate"/>
    <property type="evidence" value="ECO:0007669"/>
    <property type="project" value="TreeGrafter"/>
</dbReference>
<dbReference type="FunFam" id="3.40.50.10800:FF:000003">
    <property type="entry name" value="Quinolinate synthase A"/>
    <property type="match status" value="1"/>
</dbReference>
<dbReference type="Gene3D" id="3.40.50.10800">
    <property type="entry name" value="NadA-like"/>
    <property type="match status" value="3"/>
</dbReference>
<dbReference type="HAMAP" id="MF_00568">
    <property type="entry name" value="NadA_type2"/>
    <property type="match status" value="1"/>
</dbReference>
<dbReference type="InterPro" id="IPR003473">
    <property type="entry name" value="NadA"/>
</dbReference>
<dbReference type="InterPro" id="IPR036094">
    <property type="entry name" value="NadA_sf"/>
</dbReference>
<dbReference type="InterPro" id="IPR023066">
    <property type="entry name" value="Quinolinate_synth_type2"/>
</dbReference>
<dbReference type="NCBIfam" id="TIGR00550">
    <property type="entry name" value="nadA"/>
    <property type="match status" value="1"/>
</dbReference>
<dbReference type="NCBIfam" id="NF006878">
    <property type="entry name" value="PRK09375.1-2"/>
    <property type="match status" value="1"/>
</dbReference>
<dbReference type="NCBIfam" id="NF006879">
    <property type="entry name" value="PRK09375.1-4"/>
    <property type="match status" value="1"/>
</dbReference>
<dbReference type="PANTHER" id="PTHR30573:SF0">
    <property type="entry name" value="QUINOLINATE SYNTHASE, CHLOROPLASTIC"/>
    <property type="match status" value="1"/>
</dbReference>
<dbReference type="PANTHER" id="PTHR30573">
    <property type="entry name" value="QUINOLINATE SYNTHETASE A"/>
    <property type="match status" value="1"/>
</dbReference>
<dbReference type="Pfam" id="PF02445">
    <property type="entry name" value="NadA"/>
    <property type="match status" value="1"/>
</dbReference>
<dbReference type="SUPFAM" id="SSF142754">
    <property type="entry name" value="NadA-like"/>
    <property type="match status" value="1"/>
</dbReference>